<feature type="chain" id="PRO_1000084021" description="Transcriptional regulator MraZ">
    <location>
        <begin position="1"/>
        <end position="152"/>
    </location>
</feature>
<feature type="domain" description="SpoVT-AbrB 1" evidence="2">
    <location>
        <begin position="5"/>
        <end position="52"/>
    </location>
</feature>
<feature type="domain" description="SpoVT-AbrB 2" evidence="2">
    <location>
        <begin position="81"/>
        <end position="124"/>
    </location>
</feature>
<sequence length="152" mass="17263">MFSGASAINLDTKGRIAIPKRYREPLHACHNSQLVITVDIQSSCLLLYPIQEWEKVAAKLALLSDTQPTERAIKRMLLGYAHECELDGNGRMLLPTPLRQYANLDKRAMLVGQLNKFELWDEAAWQQQIEQSRLAILNEDLAANERLADFSL</sequence>
<keyword id="KW-0963">Cytoplasm</keyword>
<keyword id="KW-0238">DNA-binding</keyword>
<keyword id="KW-0677">Repeat</keyword>
<keyword id="KW-0804">Transcription</keyword>
<keyword id="KW-0805">Transcription regulation</keyword>
<accession>B0TQM8</accession>
<evidence type="ECO:0000255" key="1">
    <source>
        <dbReference type="HAMAP-Rule" id="MF_01008"/>
    </source>
</evidence>
<evidence type="ECO:0000255" key="2">
    <source>
        <dbReference type="PROSITE-ProRule" id="PRU01076"/>
    </source>
</evidence>
<comment type="subunit">
    <text evidence="1">Forms oligomers.</text>
</comment>
<comment type="subcellular location">
    <subcellularLocation>
        <location evidence="1">Cytoplasm</location>
        <location evidence="1">Nucleoid</location>
    </subcellularLocation>
</comment>
<comment type="similarity">
    <text evidence="1">Belongs to the MraZ family.</text>
</comment>
<proteinExistence type="inferred from homology"/>
<protein>
    <recommendedName>
        <fullName>Transcriptional regulator MraZ</fullName>
    </recommendedName>
</protein>
<reference key="1">
    <citation type="submission" date="2008-01" db="EMBL/GenBank/DDBJ databases">
        <title>Complete sequence of Shewanella halifaxensis HAW-EB4.</title>
        <authorList>
            <consortium name="US DOE Joint Genome Institute"/>
            <person name="Copeland A."/>
            <person name="Lucas S."/>
            <person name="Lapidus A."/>
            <person name="Glavina del Rio T."/>
            <person name="Dalin E."/>
            <person name="Tice H."/>
            <person name="Bruce D."/>
            <person name="Goodwin L."/>
            <person name="Pitluck S."/>
            <person name="Sims D."/>
            <person name="Brettin T."/>
            <person name="Detter J.C."/>
            <person name="Han C."/>
            <person name="Kuske C.R."/>
            <person name="Schmutz J."/>
            <person name="Larimer F."/>
            <person name="Land M."/>
            <person name="Hauser L."/>
            <person name="Kyrpides N."/>
            <person name="Kim E."/>
            <person name="Zhao J.-S."/>
            <person name="Richardson P."/>
        </authorList>
    </citation>
    <scope>NUCLEOTIDE SEQUENCE [LARGE SCALE GENOMIC DNA]</scope>
    <source>
        <strain>HAW-EB4</strain>
    </source>
</reference>
<dbReference type="EMBL" id="CP000931">
    <property type="protein sequence ID" value="ABZ75021.1"/>
    <property type="molecule type" value="Genomic_DNA"/>
</dbReference>
<dbReference type="RefSeq" id="WP_012275575.1">
    <property type="nucleotide sequence ID" value="NC_010334.1"/>
</dbReference>
<dbReference type="SMR" id="B0TQM8"/>
<dbReference type="STRING" id="458817.Shal_0446"/>
<dbReference type="KEGG" id="shl:Shal_0446"/>
<dbReference type="eggNOG" id="COG2001">
    <property type="taxonomic scope" value="Bacteria"/>
</dbReference>
<dbReference type="HOGENOM" id="CLU_107907_2_0_6"/>
<dbReference type="OrthoDB" id="9807753at2"/>
<dbReference type="Proteomes" id="UP000001317">
    <property type="component" value="Chromosome"/>
</dbReference>
<dbReference type="GO" id="GO:0005737">
    <property type="term" value="C:cytoplasm"/>
    <property type="evidence" value="ECO:0007669"/>
    <property type="project" value="UniProtKB-UniRule"/>
</dbReference>
<dbReference type="GO" id="GO:0009295">
    <property type="term" value="C:nucleoid"/>
    <property type="evidence" value="ECO:0007669"/>
    <property type="project" value="UniProtKB-SubCell"/>
</dbReference>
<dbReference type="GO" id="GO:0003700">
    <property type="term" value="F:DNA-binding transcription factor activity"/>
    <property type="evidence" value="ECO:0007669"/>
    <property type="project" value="UniProtKB-UniRule"/>
</dbReference>
<dbReference type="GO" id="GO:0000976">
    <property type="term" value="F:transcription cis-regulatory region binding"/>
    <property type="evidence" value="ECO:0007669"/>
    <property type="project" value="TreeGrafter"/>
</dbReference>
<dbReference type="GO" id="GO:2000143">
    <property type="term" value="P:negative regulation of DNA-templated transcription initiation"/>
    <property type="evidence" value="ECO:0007669"/>
    <property type="project" value="TreeGrafter"/>
</dbReference>
<dbReference type="CDD" id="cd16321">
    <property type="entry name" value="MraZ_C"/>
    <property type="match status" value="1"/>
</dbReference>
<dbReference type="CDD" id="cd16320">
    <property type="entry name" value="MraZ_N"/>
    <property type="match status" value="1"/>
</dbReference>
<dbReference type="Gene3D" id="3.40.1550.20">
    <property type="entry name" value="Transcriptional regulator MraZ domain"/>
    <property type="match status" value="1"/>
</dbReference>
<dbReference type="HAMAP" id="MF_01008">
    <property type="entry name" value="MraZ"/>
    <property type="match status" value="1"/>
</dbReference>
<dbReference type="InterPro" id="IPR003444">
    <property type="entry name" value="MraZ"/>
</dbReference>
<dbReference type="InterPro" id="IPR035644">
    <property type="entry name" value="MraZ_C"/>
</dbReference>
<dbReference type="InterPro" id="IPR020603">
    <property type="entry name" value="MraZ_dom"/>
</dbReference>
<dbReference type="InterPro" id="IPR035642">
    <property type="entry name" value="MraZ_N"/>
</dbReference>
<dbReference type="InterPro" id="IPR038619">
    <property type="entry name" value="MraZ_sf"/>
</dbReference>
<dbReference type="InterPro" id="IPR007159">
    <property type="entry name" value="SpoVT-AbrB_dom"/>
</dbReference>
<dbReference type="InterPro" id="IPR037914">
    <property type="entry name" value="SpoVT-AbrB_sf"/>
</dbReference>
<dbReference type="NCBIfam" id="TIGR00242">
    <property type="entry name" value="division/cell wall cluster transcriptional repressor MraZ"/>
    <property type="match status" value="1"/>
</dbReference>
<dbReference type="PANTHER" id="PTHR34701">
    <property type="entry name" value="TRANSCRIPTIONAL REGULATOR MRAZ"/>
    <property type="match status" value="1"/>
</dbReference>
<dbReference type="PANTHER" id="PTHR34701:SF1">
    <property type="entry name" value="TRANSCRIPTIONAL REGULATOR MRAZ"/>
    <property type="match status" value="1"/>
</dbReference>
<dbReference type="Pfam" id="PF02381">
    <property type="entry name" value="MraZ"/>
    <property type="match status" value="2"/>
</dbReference>
<dbReference type="SUPFAM" id="SSF89447">
    <property type="entry name" value="AbrB/MazE/MraZ-like"/>
    <property type="match status" value="1"/>
</dbReference>
<dbReference type="PROSITE" id="PS51740">
    <property type="entry name" value="SPOVT_ABRB"/>
    <property type="match status" value="2"/>
</dbReference>
<name>MRAZ_SHEHH</name>
<gene>
    <name evidence="1" type="primary">mraZ</name>
    <name type="ordered locus">Shal_0446</name>
</gene>
<organism>
    <name type="scientific">Shewanella halifaxensis (strain HAW-EB4)</name>
    <dbReference type="NCBI Taxonomy" id="458817"/>
    <lineage>
        <taxon>Bacteria</taxon>
        <taxon>Pseudomonadati</taxon>
        <taxon>Pseudomonadota</taxon>
        <taxon>Gammaproteobacteria</taxon>
        <taxon>Alteromonadales</taxon>
        <taxon>Shewanellaceae</taxon>
        <taxon>Shewanella</taxon>
    </lineage>
</organism>